<dbReference type="EC" id="2.1.2.9" evidence="1"/>
<dbReference type="EMBL" id="CP001601">
    <property type="protein sequence ID" value="ACP32781.1"/>
    <property type="molecule type" value="Genomic_DNA"/>
</dbReference>
<dbReference type="RefSeq" id="WP_010186792.1">
    <property type="nucleotide sequence ID" value="NC_012590.1"/>
</dbReference>
<dbReference type="SMR" id="C3PG27"/>
<dbReference type="STRING" id="548476.cauri_1188"/>
<dbReference type="GeneID" id="31923811"/>
<dbReference type="KEGG" id="car:cauri_1188"/>
<dbReference type="eggNOG" id="COG0223">
    <property type="taxonomic scope" value="Bacteria"/>
</dbReference>
<dbReference type="HOGENOM" id="CLU_033347_1_0_11"/>
<dbReference type="OrthoDB" id="9802815at2"/>
<dbReference type="Proteomes" id="UP000002077">
    <property type="component" value="Chromosome"/>
</dbReference>
<dbReference type="GO" id="GO:0005829">
    <property type="term" value="C:cytosol"/>
    <property type="evidence" value="ECO:0007669"/>
    <property type="project" value="TreeGrafter"/>
</dbReference>
<dbReference type="GO" id="GO:0004479">
    <property type="term" value="F:methionyl-tRNA formyltransferase activity"/>
    <property type="evidence" value="ECO:0007669"/>
    <property type="project" value="UniProtKB-UniRule"/>
</dbReference>
<dbReference type="CDD" id="cd08646">
    <property type="entry name" value="FMT_core_Met-tRNA-FMT_N"/>
    <property type="match status" value="1"/>
</dbReference>
<dbReference type="CDD" id="cd08704">
    <property type="entry name" value="Met_tRNA_FMT_C"/>
    <property type="match status" value="1"/>
</dbReference>
<dbReference type="FunFam" id="3.40.50.12230:FF:000001">
    <property type="entry name" value="Methionyl-tRNA formyltransferase"/>
    <property type="match status" value="1"/>
</dbReference>
<dbReference type="Gene3D" id="3.40.50.12230">
    <property type="match status" value="1"/>
</dbReference>
<dbReference type="HAMAP" id="MF_00182">
    <property type="entry name" value="Formyl_trans"/>
    <property type="match status" value="1"/>
</dbReference>
<dbReference type="InterPro" id="IPR005794">
    <property type="entry name" value="Fmt"/>
</dbReference>
<dbReference type="InterPro" id="IPR005793">
    <property type="entry name" value="Formyl_trans_C"/>
</dbReference>
<dbReference type="InterPro" id="IPR002376">
    <property type="entry name" value="Formyl_transf_N"/>
</dbReference>
<dbReference type="InterPro" id="IPR036477">
    <property type="entry name" value="Formyl_transf_N_sf"/>
</dbReference>
<dbReference type="InterPro" id="IPR011034">
    <property type="entry name" value="Formyl_transferase-like_C_sf"/>
</dbReference>
<dbReference type="InterPro" id="IPR044135">
    <property type="entry name" value="Met-tRNA-FMT_C"/>
</dbReference>
<dbReference type="InterPro" id="IPR041711">
    <property type="entry name" value="Met-tRNA-FMT_N"/>
</dbReference>
<dbReference type="NCBIfam" id="TIGR00460">
    <property type="entry name" value="fmt"/>
    <property type="match status" value="1"/>
</dbReference>
<dbReference type="PANTHER" id="PTHR11138">
    <property type="entry name" value="METHIONYL-TRNA FORMYLTRANSFERASE"/>
    <property type="match status" value="1"/>
</dbReference>
<dbReference type="PANTHER" id="PTHR11138:SF5">
    <property type="entry name" value="METHIONYL-TRNA FORMYLTRANSFERASE, MITOCHONDRIAL"/>
    <property type="match status" value="1"/>
</dbReference>
<dbReference type="Pfam" id="PF02911">
    <property type="entry name" value="Formyl_trans_C"/>
    <property type="match status" value="1"/>
</dbReference>
<dbReference type="Pfam" id="PF00551">
    <property type="entry name" value="Formyl_trans_N"/>
    <property type="match status" value="1"/>
</dbReference>
<dbReference type="SUPFAM" id="SSF50486">
    <property type="entry name" value="FMT C-terminal domain-like"/>
    <property type="match status" value="1"/>
</dbReference>
<dbReference type="SUPFAM" id="SSF53328">
    <property type="entry name" value="Formyltransferase"/>
    <property type="match status" value="1"/>
</dbReference>
<proteinExistence type="inferred from homology"/>
<organism>
    <name type="scientific">Corynebacterium aurimucosum (strain ATCC 700975 / DSM 44827 / CIP 107346 / CN-1)</name>
    <name type="common">Corynebacterium nigricans</name>
    <dbReference type="NCBI Taxonomy" id="548476"/>
    <lineage>
        <taxon>Bacteria</taxon>
        <taxon>Bacillati</taxon>
        <taxon>Actinomycetota</taxon>
        <taxon>Actinomycetes</taxon>
        <taxon>Mycobacteriales</taxon>
        <taxon>Corynebacteriaceae</taxon>
        <taxon>Corynebacterium</taxon>
    </lineage>
</organism>
<accession>C3PG27</accession>
<feature type="chain" id="PRO_1000190018" description="Methionyl-tRNA formyltransferase">
    <location>
        <begin position="1"/>
        <end position="332"/>
    </location>
</feature>
<feature type="binding site" evidence="1">
    <location>
        <begin position="114"/>
        <end position="117"/>
    </location>
    <ligand>
        <name>(6S)-5,6,7,8-tetrahydrofolate</name>
        <dbReference type="ChEBI" id="CHEBI:57453"/>
    </ligand>
</feature>
<keyword id="KW-0648">Protein biosynthesis</keyword>
<keyword id="KW-1185">Reference proteome</keyword>
<keyword id="KW-0808">Transferase</keyword>
<sequence length="332" mass="35322">MRIIFAGTPEPAVVALQKLIESHHEVAAVITRPDARRGRGRSLHPSPVKALAEEHGIEVLTPTTLKQGTEDGDALRARLAEIAPEAIPVVAYGNLITEDLLSLPKHGWVNLHFSLLPTWRGAAPVQAAIAAGDERTGATTFRIDQGLDTGDILATMEETIRPTDTADDLLTRLAYAGGDLLVETMNGLEDGSIIPQPQEGEATYAHKIATEDARIDWTAKVDVIDRHIRAHTPGPGAWTLLGESRLKVGPVSVVEPAELGELSDTTALTSLQPGEVHVAKKEVMVGTGSTPVRLGQIQPPGKKMMNAADWGRGLSSQASQAAEGGQVEVKFS</sequence>
<comment type="function">
    <text evidence="1">Attaches a formyl group to the free amino group of methionyl-tRNA(fMet). The formyl group appears to play a dual role in the initiator identity of N-formylmethionyl-tRNA by promoting its recognition by IF2 and preventing the misappropriation of this tRNA by the elongation apparatus.</text>
</comment>
<comment type="catalytic activity">
    <reaction evidence="1">
        <text>L-methionyl-tRNA(fMet) + (6R)-10-formyltetrahydrofolate = N-formyl-L-methionyl-tRNA(fMet) + (6S)-5,6,7,8-tetrahydrofolate + H(+)</text>
        <dbReference type="Rhea" id="RHEA:24380"/>
        <dbReference type="Rhea" id="RHEA-COMP:9952"/>
        <dbReference type="Rhea" id="RHEA-COMP:9953"/>
        <dbReference type="ChEBI" id="CHEBI:15378"/>
        <dbReference type="ChEBI" id="CHEBI:57453"/>
        <dbReference type="ChEBI" id="CHEBI:78530"/>
        <dbReference type="ChEBI" id="CHEBI:78844"/>
        <dbReference type="ChEBI" id="CHEBI:195366"/>
        <dbReference type="EC" id="2.1.2.9"/>
    </reaction>
</comment>
<comment type="similarity">
    <text evidence="1">Belongs to the Fmt family.</text>
</comment>
<evidence type="ECO:0000255" key="1">
    <source>
        <dbReference type="HAMAP-Rule" id="MF_00182"/>
    </source>
</evidence>
<gene>
    <name evidence="1" type="primary">fmt</name>
    <name type="ordered locus">cauri_1188</name>
</gene>
<name>FMT_CORA7</name>
<protein>
    <recommendedName>
        <fullName evidence="1">Methionyl-tRNA formyltransferase</fullName>
        <ecNumber evidence="1">2.1.2.9</ecNumber>
    </recommendedName>
</protein>
<reference key="1">
    <citation type="journal article" date="2010" name="BMC Genomics">
        <title>Complete genome sequence and lifestyle of black-pigmented Corynebacterium aurimucosum ATCC 700975 (formerly C. nigricans CN-1) isolated from a vaginal swab of a woman with spontaneous abortion.</title>
        <authorList>
            <person name="Trost E."/>
            <person name="Gotker S."/>
            <person name="Schneider J."/>
            <person name="Schneiker-Bekel S."/>
            <person name="Szczepanowski R."/>
            <person name="Tilker A."/>
            <person name="Viehoever P."/>
            <person name="Arnold W."/>
            <person name="Bekel T."/>
            <person name="Blom J."/>
            <person name="Gartemann K.H."/>
            <person name="Linke B."/>
            <person name="Goesmann A."/>
            <person name="Puhler A."/>
            <person name="Shukla S.K."/>
            <person name="Tauch A."/>
        </authorList>
    </citation>
    <scope>NUCLEOTIDE SEQUENCE [LARGE SCALE GENOMIC DNA]</scope>
    <source>
        <strain>ATCC 700975 / DSM 44827 / CIP 107346 / CN-1</strain>
    </source>
</reference>